<proteinExistence type="inferred from homology"/>
<accession>Q8R7N0</accession>
<reference key="1">
    <citation type="journal article" date="2002" name="Genome Res.">
        <title>A complete sequence of the T. tengcongensis genome.</title>
        <authorList>
            <person name="Bao Q."/>
            <person name="Tian Y."/>
            <person name="Li W."/>
            <person name="Xu Z."/>
            <person name="Xuan Z."/>
            <person name="Hu S."/>
            <person name="Dong W."/>
            <person name="Yang J."/>
            <person name="Chen Y."/>
            <person name="Xue Y."/>
            <person name="Xu Y."/>
            <person name="Lai X."/>
            <person name="Huang L."/>
            <person name="Dong X."/>
            <person name="Ma Y."/>
            <person name="Ling L."/>
            <person name="Tan H."/>
            <person name="Chen R."/>
            <person name="Wang J."/>
            <person name="Yu J."/>
            <person name="Yang H."/>
        </authorList>
    </citation>
    <scope>NUCLEOTIDE SEQUENCE [LARGE SCALE GENOMIC DNA]</scope>
    <source>
        <strain>DSM 15242 / JCM 11007 / NBRC 100824 / MB4</strain>
    </source>
</reference>
<dbReference type="EMBL" id="AE008691">
    <property type="protein sequence ID" value="AAM25512.1"/>
    <property type="molecule type" value="Genomic_DNA"/>
</dbReference>
<dbReference type="RefSeq" id="WP_011026409.1">
    <property type="nucleotide sequence ID" value="NZ_JANUCV010000001.1"/>
</dbReference>
<dbReference type="SMR" id="Q8R7N0"/>
<dbReference type="STRING" id="273068.TTE2373"/>
<dbReference type="KEGG" id="tte:TTE2373"/>
<dbReference type="eggNOG" id="COG0782">
    <property type="taxonomic scope" value="Bacteria"/>
</dbReference>
<dbReference type="HOGENOM" id="CLU_101379_2_1_9"/>
<dbReference type="OrthoDB" id="9808774at2"/>
<dbReference type="Proteomes" id="UP000000555">
    <property type="component" value="Chromosome"/>
</dbReference>
<dbReference type="GO" id="GO:0003677">
    <property type="term" value="F:DNA binding"/>
    <property type="evidence" value="ECO:0007669"/>
    <property type="project" value="UniProtKB-UniRule"/>
</dbReference>
<dbReference type="GO" id="GO:0070063">
    <property type="term" value="F:RNA polymerase binding"/>
    <property type="evidence" value="ECO:0007669"/>
    <property type="project" value="InterPro"/>
</dbReference>
<dbReference type="GO" id="GO:0006354">
    <property type="term" value="P:DNA-templated transcription elongation"/>
    <property type="evidence" value="ECO:0007669"/>
    <property type="project" value="TreeGrafter"/>
</dbReference>
<dbReference type="GO" id="GO:0032784">
    <property type="term" value="P:regulation of DNA-templated transcription elongation"/>
    <property type="evidence" value="ECO:0007669"/>
    <property type="project" value="UniProtKB-UniRule"/>
</dbReference>
<dbReference type="FunFam" id="1.10.287.180:FF:000001">
    <property type="entry name" value="Transcription elongation factor GreA"/>
    <property type="match status" value="1"/>
</dbReference>
<dbReference type="FunFam" id="3.10.50.30:FF:000001">
    <property type="entry name" value="Transcription elongation factor GreA"/>
    <property type="match status" value="1"/>
</dbReference>
<dbReference type="Gene3D" id="3.10.50.30">
    <property type="entry name" value="Transcription elongation factor, GreA/GreB, C-terminal domain"/>
    <property type="match status" value="1"/>
</dbReference>
<dbReference type="Gene3D" id="1.10.287.180">
    <property type="entry name" value="Transcription elongation factor, GreA/GreB, N-terminal domain"/>
    <property type="match status" value="1"/>
</dbReference>
<dbReference type="HAMAP" id="MF_00105">
    <property type="entry name" value="GreA_GreB"/>
    <property type="match status" value="1"/>
</dbReference>
<dbReference type="InterPro" id="IPR036953">
    <property type="entry name" value="GreA/GreB_C_sf"/>
</dbReference>
<dbReference type="InterPro" id="IPR018151">
    <property type="entry name" value="TF_GreA/GreB_CS"/>
</dbReference>
<dbReference type="InterPro" id="IPR006359">
    <property type="entry name" value="Tscrpt_elong_fac_GreA"/>
</dbReference>
<dbReference type="InterPro" id="IPR028624">
    <property type="entry name" value="Tscrpt_elong_fac_GreA/B"/>
</dbReference>
<dbReference type="InterPro" id="IPR001437">
    <property type="entry name" value="Tscrpt_elong_fac_GreA/B_C"/>
</dbReference>
<dbReference type="InterPro" id="IPR023459">
    <property type="entry name" value="Tscrpt_elong_fac_GreA/B_fam"/>
</dbReference>
<dbReference type="InterPro" id="IPR022691">
    <property type="entry name" value="Tscrpt_elong_fac_GreA/B_N"/>
</dbReference>
<dbReference type="InterPro" id="IPR036805">
    <property type="entry name" value="Tscrpt_elong_fac_GreA/B_N_sf"/>
</dbReference>
<dbReference type="NCBIfam" id="TIGR01462">
    <property type="entry name" value="greA"/>
    <property type="match status" value="1"/>
</dbReference>
<dbReference type="NCBIfam" id="NF001261">
    <property type="entry name" value="PRK00226.1-2"/>
    <property type="match status" value="1"/>
</dbReference>
<dbReference type="NCBIfam" id="NF001263">
    <property type="entry name" value="PRK00226.1-4"/>
    <property type="match status" value="1"/>
</dbReference>
<dbReference type="PANTHER" id="PTHR30437">
    <property type="entry name" value="TRANSCRIPTION ELONGATION FACTOR GREA"/>
    <property type="match status" value="1"/>
</dbReference>
<dbReference type="PANTHER" id="PTHR30437:SF4">
    <property type="entry name" value="TRANSCRIPTION ELONGATION FACTOR GREA"/>
    <property type="match status" value="1"/>
</dbReference>
<dbReference type="Pfam" id="PF01272">
    <property type="entry name" value="GreA_GreB"/>
    <property type="match status" value="1"/>
</dbReference>
<dbReference type="Pfam" id="PF03449">
    <property type="entry name" value="GreA_GreB_N"/>
    <property type="match status" value="1"/>
</dbReference>
<dbReference type="PIRSF" id="PIRSF006092">
    <property type="entry name" value="GreA_GreB"/>
    <property type="match status" value="1"/>
</dbReference>
<dbReference type="SUPFAM" id="SSF54534">
    <property type="entry name" value="FKBP-like"/>
    <property type="match status" value="1"/>
</dbReference>
<dbReference type="SUPFAM" id="SSF46557">
    <property type="entry name" value="GreA transcript cleavage protein, N-terminal domain"/>
    <property type="match status" value="1"/>
</dbReference>
<dbReference type="PROSITE" id="PS00829">
    <property type="entry name" value="GREAB_1"/>
    <property type="match status" value="1"/>
</dbReference>
<dbReference type="PROSITE" id="PS00830">
    <property type="entry name" value="GREAB_2"/>
    <property type="match status" value="1"/>
</dbReference>
<keyword id="KW-0175">Coiled coil</keyword>
<keyword id="KW-0238">DNA-binding</keyword>
<keyword id="KW-1185">Reference proteome</keyword>
<keyword id="KW-0804">Transcription</keyword>
<keyword id="KW-0805">Transcription regulation</keyword>
<organism>
    <name type="scientific">Caldanaerobacter subterraneus subsp. tengcongensis (strain DSM 15242 / JCM 11007 / NBRC 100824 / MB4)</name>
    <name type="common">Thermoanaerobacter tengcongensis</name>
    <dbReference type="NCBI Taxonomy" id="273068"/>
    <lineage>
        <taxon>Bacteria</taxon>
        <taxon>Bacillati</taxon>
        <taxon>Bacillota</taxon>
        <taxon>Clostridia</taxon>
        <taxon>Thermoanaerobacterales</taxon>
        <taxon>Thermoanaerobacteraceae</taxon>
        <taxon>Caldanaerobacter</taxon>
    </lineage>
</organism>
<evidence type="ECO:0000255" key="1">
    <source>
        <dbReference type="HAMAP-Rule" id="MF_00105"/>
    </source>
</evidence>
<protein>
    <recommendedName>
        <fullName evidence="1">Transcription elongation factor GreA</fullName>
    </recommendedName>
    <alternativeName>
        <fullName evidence="1">Transcript cleavage factor GreA</fullName>
    </alternativeName>
</protein>
<comment type="function">
    <text evidence="1">Necessary for efficient RNA polymerase transcription elongation past template-encoded arresting sites. The arresting sites in DNA have the property of trapping a certain fraction of elongating RNA polymerases that pass through, resulting in locked ternary complexes. Cleavage of the nascent transcript by cleavage factors such as GreA or GreB allows the resumption of elongation from the new 3'terminus. GreA releases sequences of 2 to 3 nucleotides.</text>
</comment>
<comment type="similarity">
    <text evidence="1">Belongs to the GreA/GreB family.</text>
</comment>
<sequence>MSKPVILTYEGLKKLEEELEYLKTVKRAEVAEKIKQARAFGDLSENSEYDEAKNEQAFIEGRIATLEAMLKNAKVIDEEDIKLDEVSIGCTVKVFDETYNEEVEYTIVGSAEADPMNNKISDESPIGKALLGKKVGETISVEVPAGVIKLKILEIRR</sequence>
<name>GREA_CALS4</name>
<gene>
    <name evidence="1" type="primary">greA</name>
    <name type="ordered locus">TTE2373</name>
</gene>
<feature type="chain" id="PRO_0000176986" description="Transcription elongation factor GreA">
    <location>
        <begin position="1"/>
        <end position="157"/>
    </location>
</feature>
<feature type="coiled-coil region" evidence="1">
    <location>
        <begin position="12"/>
        <end position="74"/>
    </location>
</feature>